<proteinExistence type="inferred from homology"/>
<keyword id="KW-0963">Cytoplasm</keyword>
<keyword id="KW-0396">Initiation factor</keyword>
<keyword id="KW-0648">Protein biosynthesis</keyword>
<comment type="function">
    <text evidence="1">Component of the eukaryotic translation initiation factor 3 (eIF-3) complex, which is involved in protein synthesis of a specialized repertoire of mRNAs and, together with other initiation factors, stimulates binding of mRNA and methionyl-tRNAi to the 40S ribosome. The eIF-3 complex specifically targets and initiates translation of a subset of mRNAs involved in cell proliferation.</text>
</comment>
<comment type="subunit">
    <text evidence="1">Component of the eukaryotic translation initiation factor 3 (eIF-3) complex.</text>
</comment>
<comment type="subcellular location">
    <subcellularLocation>
        <location evidence="1">Cytoplasm</location>
    </subcellularLocation>
</comment>
<comment type="similarity">
    <text evidence="1">Belongs to the eIF-3 subunit L family.</text>
</comment>
<organism>
    <name type="scientific">Aspergillus fumigatus (strain CBS 144.89 / FGSC A1163 / CEA10)</name>
    <name type="common">Neosartorya fumigata</name>
    <dbReference type="NCBI Taxonomy" id="451804"/>
    <lineage>
        <taxon>Eukaryota</taxon>
        <taxon>Fungi</taxon>
        <taxon>Dikarya</taxon>
        <taxon>Ascomycota</taxon>
        <taxon>Pezizomycotina</taxon>
        <taxon>Eurotiomycetes</taxon>
        <taxon>Eurotiomycetidae</taxon>
        <taxon>Eurotiales</taxon>
        <taxon>Aspergillaceae</taxon>
        <taxon>Aspergillus</taxon>
        <taxon>Aspergillus subgen. Fumigati</taxon>
    </lineage>
</organism>
<reference key="1">
    <citation type="journal article" date="2008" name="PLoS Genet.">
        <title>Genomic islands in the pathogenic filamentous fungus Aspergillus fumigatus.</title>
        <authorList>
            <person name="Fedorova N.D."/>
            <person name="Khaldi N."/>
            <person name="Joardar V.S."/>
            <person name="Maiti R."/>
            <person name="Amedeo P."/>
            <person name="Anderson M.J."/>
            <person name="Crabtree J."/>
            <person name="Silva J.C."/>
            <person name="Badger J.H."/>
            <person name="Albarraq A."/>
            <person name="Angiuoli S."/>
            <person name="Bussey H."/>
            <person name="Bowyer P."/>
            <person name="Cotty P.J."/>
            <person name="Dyer P.S."/>
            <person name="Egan A."/>
            <person name="Galens K."/>
            <person name="Fraser-Liggett C.M."/>
            <person name="Haas B.J."/>
            <person name="Inman J.M."/>
            <person name="Kent R."/>
            <person name="Lemieux S."/>
            <person name="Malavazi I."/>
            <person name="Orvis J."/>
            <person name="Roemer T."/>
            <person name="Ronning C.M."/>
            <person name="Sundaram J.P."/>
            <person name="Sutton G."/>
            <person name="Turner G."/>
            <person name="Venter J.C."/>
            <person name="White O.R."/>
            <person name="Whitty B.R."/>
            <person name="Youngman P."/>
            <person name="Wolfe K.H."/>
            <person name="Goldman G.H."/>
            <person name="Wortman J.R."/>
            <person name="Jiang B."/>
            <person name="Denning D.W."/>
            <person name="Nierman W.C."/>
        </authorList>
    </citation>
    <scope>NUCLEOTIDE SEQUENCE [LARGE SCALE GENOMIC DNA]</scope>
    <source>
        <strain>CBS 144.89 / FGSC A1163 / CEA10</strain>
    </source>
</reference>
<sequence>MSYEERVNAHPNLGDESDVEEEALVNDYREQVNFDDGMSELDRTTSLGTGSQTQDLQAQLAAAATPLEYQATLETKFASYDNYCSLFHYILNSEGPVELEVPSYYWAWDVIDEFIYQFESFCRYRNRVARSGSNEEEAQLLRENPNTWGCYSVLNVLYSLIQKSQINEQLAAIKRGEDPLAFAGEYGSRPLYKMLGYFSIIGLLRVHCLLGDFSLALKTLDDIEMNKKAMFARVMAAHFTTYYYVGFSYMMMRRYGDAIRMFSHILVYVSRTKNFQKGGNSYDAIAKKNDQMYALIAICVALHPTRLDDTIHSALREKYGEQLLRLQHGGPDALPLFEELFRSACPKFISPTPPDFDNPALNIDPVDHHTAIFMDEVKNTLYNPTIRSYLKLYTTMDLKKLAGFLEVQPEVLRSWLLVNKQRSRQVRWVEGGLLEGEVVSANDLDYALENDLIHVSETKAGRRLVDWYLRNLARVY</sequence>
<name>EIF3L_ASPFC</name>
<accession>B0XS74</accession>
<dbReference type="EMBL" id="DS499595">
    <property type="protein sequence ID" value="EDP54560.1"/>
    <property type="molecule type" value="Genomic_DNA"/>
</dbReference>
<dbReference type="SMR" id="B0XS74"/>
<dbReference type="EnsemblFungi" id="EDP54560">
    <property type="protein sequence ID" value="EDP54560"/>
    <property type="gene ID" value="AFUB_026190"/>
</dbReference>
<dbReference type="VEuPathDB" id="FungiDB:AFUB_026190"/>
<dbReference type="HOGENOM" id="CLU_029210_2_0_1"/>
<dbReference type="OrthoDB" id="20425at5052"/>
<dbReference type="PhylomeDB" id="B0XS74"/>
<dbReference type="Proteomes" id="UP000001699">
    <property type="component" value="Unassembled WGS sequence"/>
</dbReference>
<dbReference type="GO" id="GO:0016282">
    <property type="term" value="C:eukaryotic 43S preinitiation complex"/>
    <property type="evidence" value="ECO:0007669"/>
    <property type="project" value="UniProtKB-UniRule"/>
</dbReference>
<dbReference type="GO" id="GO:0033290">
    <property type="term" value="C:eukaryotic 48S preinitiation complex"/>
    <property type="evidence" value="ECO:0007669"/>
    <property type="project" value="UniProtKB-UniRule"/>
</dbReference>
<dbReference type="GO" id="GO:0005852">
    <property type="term" value="C:eukaryotic translation initiation factor 3 complex"/>
    <property type="evidence" value="ECO:0007669"/>
    <property type="project" value="UniProtKB-UniRule"/>
</dbReference>
<dbReference type="GO" id="GO:0003743">
    <property type="term" value="F:translation initiation factor activity"/>
    <property type="evidence" value="ECO:0007669"/>
    <property type="project" value="UniProtKB-UniRule"/>
</dbReference>
<dbReference type="GO" id="GO:0001732">
    <property type="term" value="P:formation of cytoplasmic translation initiation complex"/>
    <property type="evidence" value="ECO:0007669"/>
    <property type="project" value="UniProtKB-UniRule"/>
</dbReference>
<dbReference type="HAMAP" id="MF_03011">
    <property type="entry name" value="eIF3l"/>
    <property type="match status" value="1"/>
</dbReference>
<dbReference type="InterPro" id="IPR019382">
    <property type="entry name" value="eIF3l"/>
</dbReference>
<dbReference type="InterPro" id="IPR000717">
    <property type="entry name" value="PCI_dom"/>
</dbReference>
<dbReference type="PANTHER" id="PTHR13242">
    <property type="entry name" value="EUKARYOTIC TRANSLATION INITIATION FACTOR 3"/>
    <property type="match status" value="1"/>
</dbReference>
<dbReference type="PANTHER" id="PTHR13242:SF0">
    <property type="entry name" value="EUKARYOTIC TRANSLATION INITIATION FACTOR 3 SUBUNIT L"/>
    <property type="match status" value="1"/>
</dbReference>
<dbReference type="Pfam" id="PF10255">
    <property type="entry name" value="Paf67"/>
    <property type="match status" value="1"/>
</dbReference>
<dbReference type="PROSITE" id="PS50250">
    <property type="entry name" value="PCI"/>
    <property type="match status" value="1"/>
</dbReference>
<evidence type="ECO:0000255" key="1">
    <source>
        <dbReference type="HAMAP-Rule" id="MF_03011"/>
    </source>
</evidence>
<evidence type="ECO:0000255" key="2">
    <source>
        <dbReference type="PROSITE-ProRule" id="PRU01185"/>
    </source>
</evidence>
<protein>
    <recommendedName>
        <fullName evidence="1">Eukaryotic translation initiation factor 3 subunit L</fullName>
        <shortName evidence="1">eIF3l</shortName>
    </recommendedName>
</protein>
<feature type="chain" id="PRO_0000364256" description="Eukaryotic translation initiation factor 3 subunit L">
    <location>
        <begin position="1"/>
        <end position="476"/>
    </location>
</feature>
<feature type="domain" description="PCI" evidence="2">
    <location>
        <begin position="257"/>
        <end position="452"/>
    </location>
</feature>
<gene>
    <name type="ORF">AFUB_026190</name>
</gene>